<dbReference type="EC" id="4.3.1.18" evidence="1"/>
<dbReference type="EMBL" id="BA000004">
    <property type="protein sequence ID" value="BAB05481.1"/>
    <property type="molecule type" value="Genomic_DNA"/>
</dbReference>
<dbReference type="PIR" id="B83870">
    <property type="entry name" value="B83870"/>
</dbReference>
<dbReference type="RefSeq" id="WP_010897923.1">
    <property type="nucleotide sequence ID" value="NC_002570.2"/>
</dbReference>
<dbReference type="SMR" id="Q9KC12"/>
<dbReference type="STRING" id="272558.gene:10727660"/>
<dbReference type="KEGG" id="bha:BH1762"/>
<dbReference type="eggNOG" id="COG3048">
    <property type="taxonomic scope" value="Bacteria"/>
</dbReference>
<dbReference type="HOGENOM" id="CLU_035707_0_0_9"/>
<dbReference type="OrthoDB" id="9780546at2"/>
<dbReference type="Proteomes" id="UP000001258">
    <property type="component" value="Chromosome"/>
</dbReference>
<dbReference type="GO" id="GO:0008721">
    <property type="term" value="F:D-serine ammonia-lyase activity"/>
    <property type="evidence" value="ECO:0007669"/>
    <property type="project" value="UniProtKB-EC"/>
</dbReference>
<dbReference type="GO" id="GO:0016836">
    <property type="term" value="F:hydro-lyase activity"/>
    <property type="evidence" value="ECO:0007669"/>
    <property type="project" value="UniProtKB-UniRule"/>
</dbReference>
<dbReference type="GO" id="GO:0030170">
    <property type="term" value="F:pyridoxal phosphate binding"/>
    <property type="evidence" value="ECO:0007669"/>
    <property type="project" value="InterPro"/>
</dbReference>
<dbReference type="GO" id="GO:0036088">
    <property type="term" value="P:D-serine catabolic process"/>
    <property type="evidence" value="ECO:0007669"/>
    <property type="project" value="TreeGrafter"/>
</dbReference>
<dbReference type="GO" id="GO:0009097">
    <property type="term" value="P:isoleucine biosynthetic process"/>
    <property type="evidence" value="ECO:0007669"/>
    <property type="project" value="TreeGrafter"/>
</dbReference>
<dbReference type="CDD" id="cd06447">
    <property type="entry name" value="D-Ser-dehyd"/>
    <property type="match status" value="1"/>
</dbReference>
<dbReference type="FunFam" id="3.40.50.1100:FF:000018">
    <property type="entry name" value="D-serine dehydratase"/>
    <property type="match status" value="1"/>
</dbReference>
<dbReference type="Gene3D" id="3.40.50.1100">
    <property type="match status" value="2"/>
</dbReference>
<dbReference type="HAMAP" id="MF_01030">
    <property type="entry name" value="D_Ser_dehydrat"/>
    <property type="match status" value="1"/>
</dbReference>
<dbReference type="InterPro" id="IPR011780">
    <property type="entry name" value="D_Ser_am_lyase"/>
</dbReference>
<dbReference type="InterPro" id="IPR050147">
    <property type="entry name" value="Ser/Thr_Dehydratase"/>
</dbReference>
<dbReference type="InterPro" id="IPR000634">
    <property type="entry name" value="Ser/Thr_deHydtase_PyrdxlP-BS"/>
</dbReference>
<dbReference type="InterPro" id="IPR001926">
    <property type="entry name" value="TrpB-like_PALP"/>
</dbReference>
<dbReference type="InterPro" id="IPR036052">
    <property type="entry name" value="TrpB-like_PALP_sf"/>
</dbReference>
<dbReference type="NCBIfam" id="TIGR02035">
    <property type="entry name" value="D_Ser_am_lyase"/>
    <property type="match status" value="1"/>
</dbReference>
<dbReference type="NCBIfam" id="NF002823">
    <property type="entry name" value="PRK02991.1"/>
    <property type="match status" value="1"/>
</dbReference>
<dbReference type="PANTHER" id="PTHR48078:SF9">
    <property type="entry name" value="D-SERINE DEHYDRATASE"/>
    <property type="match status" value="1"/>
</dbReference>
<dbReference type="PANTHER" id="PTHR48078">
    <property type="entry name" value="THREONINE DEHYDRATASE, MITOCHONDRIAL-RELATED"/>
    <property type="match status" value="1"/>
</dbReference>
<dbReference type="Pfam" id="PF00291">
    <property type="entry name" value="PALP"/>
    <property type="match status" value="1"/>
</dbReference>
<dbReference type="SUPFAM" id="SSF53686">
    <property type="entry name" value="Tryptophan synthase beta subunit-like PLP-dependent enzymes"/>
    <property type="match status" value="1"/>
</dbReference>
<dbReference type="PROSITE" id="PS00165">
    <property type="entry name" value="DEHYDRATASE_SER_THR"/>
    <property type="match status" value="1"/>
</dbReference>
<name>SDHD_HALH5</name>
<feature type="chain" id="PRO_0000185604" description="Probable D-serine dehydratase">
    <location>
        <begin position="1"/>
        <end position="442"/>
    </location>
</feature>
<feature type="modified residue" description="N6-(pyridoxal phosphate)lysine" evidence="1">
    <location>
        <position position="115"/>
    </location>
</feature>
<gene>
    <name evidence="1" type="primary">dsdA</name>
    <name type="ordered locus">BH1762</name>
</gene>
<keyword id="KW-0456">Lyase</keyword>
<keyword id="KW-0663">Pyridoxal phosphate</keyword>
<keyword id="KW-1185">Reference proteome</keyword>
<sequence>MNELEQWRKDPLVIKLMATEEVFWLNPHIDSFKSAVRKLSLHEDDVKDAEKRLDRFAPYIAKVFPGTNQAHGMIESPLVQIPSMKQSLEQKYLQPITGNLLLKCDSHLPISGSIKARGGIYEVLKHAEQLALQHGLLTVQDDYSILDSETCRDFFANYSIAVGSTGNLGLSIGIISAKLGFNVSVHMSADAKQWKKDLLRSKNVNVIEYEDDYSQAVEEGRREAEQDPTCYFVDDEQSQDLFLGYAVAAFRLKKQLAEQKITVDESHPLFVYLPCGVGGAPGGITFGLKLLFEDHVHCFFAEPTHSPSMLLGLLTGLHERISVQEIGLDNRTEADGLAVGRPSRLVSRLMKPLLSGSFTIDDDKLFTLLKELADAEGLFLEPSALAGMLGPIKLVQEGNHYLKANNLAEKMNNATHIIWGTGGSMVPEEEMMAYYRRGGTIK</sequence>
<protein>
    <recommendedName>
        <fullName evidence="1">Probable D-serine dehydratase</fullName>
        <ecNumber evidence="1">4.3.1.18</ecNumber>
    </recommendedName>
    <alternativeName>
        <fullName evidence="1">D-serine deaminase</fullName>
        <shortName evidence="1">DSD</shortName>
    </alternativeName>
</protein>
<accession>Q9KC12</accession>
<organism>
    <name type="scientific">Halalkalibacterium halodurans (strain ATCC BAA-125 / DSM 18197 / FERM 7344 / JCM 9153 / C-125)</name>
    <name type="common">Bacillus halodurans</name>
    <dbReference type="NCBI Taxonomy" id="272558"/>
    <lineage>
        <taxon>Bacteria</taxon>
        <taxon>Bacillati</taxon>
        <taxon>Bacillota</taxon>
        <taxon>Bacilli</taxon>
        <taxon>Bacillales</taxon>
        <taxon>Bacillaceae</taxon>
        <taxon>Halalkalibacterium (ex Joshi et al. 2022)</taxon>
    </lineage>
</organism>
<comment type="catalytic activity">
    <reaction evidence="1">
        <text>D-serine = pyruvate + NH4(+)</text>
        <dbReference type="Rhea" id="RHEA:13977"/>
        <dbReference type="ChEBI" id="CHEBI:15361"/>
        <dbReference type="ChEBI" id="CHEBI:28938"/>
        <dbReference type="ChEBI" id="CHEBI:35247"/>
        <dbReference type="EC" id="4.3.1.18"/>
    </reaction>
</comment>
<comment type="cofactor">
    <cofactor evidence="1">
        <name>pyridoxal 5'-phosphate</name>
        <dbReference type="ChEBI" id="CHEBI:597326"/>
    </cofactor>
</comment>
<comment type="similarity">
    <text evidence="1">Belongs to the serine/threonine dehydratase family. DsdA subfamily.</text>
</comment>
<proteinExistence type="inferred from homology"/>
<evidence type="ECO:0000255" key="1">
    <source>
        <dbReference type="HAMAP-Rule" id="MF_01030"/>
    </source>
</evidence>
<reference key="1">
    <citation type="journal article" date="2000" name="Nucleic Acids Res.">
        <title>Complete genome sequence of the alkaliphilic bacterium Bacillus halodurans and genomic sequence comparison with Bacillus subtilis.</title>
        <authorList>
            <person name="Takami H."/>
            <person name="Nakasone K."/>
            <person name="Takaki Y."/>
            <person name="Maeno G."/>
            <person name="Sasaki R."/>
            <person name="Masui N."/>
            <person name="Fuji F."/>
            <person name="Hirama C."/>
            <person name="Nakamura Y."/>
            <person name="Ogasawara N."/>
            <person name="Kuhara S."/>
            <person name="Horikoshi K."/>
        </authorList>
    </citation>
    <scope>NUCLEOTIDE SEQUENCE [LARGE SCALE GENOMIC DNA]</scope>
    <source>
        <strain>ATCC BAA-125 / DSM 18197 / FERM 7344 / JCM 9153 / C-125</strain>
    </source>
</reference>